<feature type="signal peptide" evidence="1">
    <location>
        <begin position="1"/>
        <end position="22"/>
    </location>
</feature>
<feature type="chain" id="PRO_1000148467" description="Protein YceI">
    <location>
        <begin position="23"/>
        <end position="191"/>
    </location>
</feature>
<evidence type="ECO:0000255" key="1">
    <source>
        <dbReference type="HAMAP-Rule" id="MF_00780"/>
    </source>
</evidence>
<accession>C0Q852</accession>
<reference key="1">
    <citation type="journal article" date="2009" name="PLoS ONE">
        <title>Salmonella paratyphi C: genetic divergence from Salmonella choleraesuis and pathogenic convergence with Salmonella typhi.</title>
        <authorList>
            <person name="Liu W.-Q."/>
            <person name="Feng Y."/>
            <person name="Wang Y."/>
            <person name="Zou Q.-H."/>
            <person name="Chen F."/>
            <person name="Guo J.-T."/>
            <person name="Peng Y.-H."/>
            <person name="Jin Y."/>
            <person name="Li Y.-G."/>
            <person name="Hu S.-N."/>
            <person name="Johnston R.N."/>
            <person name="Liu G.-R."/>
            <person name="Liu S.-L."/>
        </authorList>
    </citation>
    <scope>NUCLEOTIDE SEQUENCE [LARGE SCALE GENOMIC DNA]</scope>
    <source>
        <strain>RKS4594</strain>
    </source>
</reference>
<organism>
    <name type="scientific">Salmonella paratyphi C (strain RKS4594)</name>
    <dbReference type="NCBI Taxonomy" id="476213"/>
    <lineage>
        <taxon>Bacteria</taxon>
        <taxon>Pseudomonadati</taxon>
        <taxon>Pseudomonadota</taxon>
        <taxon>Gammaproteobacteria</taxon>
        <taxon>Enterobacterales</taxon>
        <taxon>Enterobacteriaceae</taxon>
        <taxon>Salmonella</taxon>
    </lineage>
</organism>
<name>YCEI_SALPC</name>
<sequence length="191" mass="21023">MKKNLLGFTLASLLFTTGSAVAAEYKIDKEGQHAFVNFRIQHLGYSWLYGTFKDFDGTFTFDEKNPSADKVNVTINTNSVDTNHAERDKHLRSAEFLNVAKFPQATFTSTSVKKEGDELDITGNLTLNGVTKPVTLEAKLMGQGDDPWGGKRAGFEAEGKIKLKDFNITTDLGPASQEVELIISVEGVQQK</sequence>
<protein>
    <recommendedName>
        <fullName evidence="1">Protein YceI</fullName>
    </recommendedName>
</protein>
<proteinExistence type="inferred from homology"/>
<dbReference type="EMBL" id="CP000857">
    <property type="protein sequence ID" value="ACN46697.1"/>
    <property type="molecule type" value="Genomic_DNA"/>
</dbReference>
<dbReference type="RefSeq" id="WP_000739886.1">
    <property type="nucleotide sequence ID" value="NC_012125.1"/>
</dbReference>
<dbReference type="SMR" id="C0Q852"/>
<dbReference type="KEGG" id="sei:SPC_2593"/>
<dbReference type="HOGENOM" id="CLU_071003_1_2_6"/>
<dbReference type="Proteomes" id="UP000001599">
    <property type="component" value="Chromosome"/>
</dbReference>
<dbReference type="GO" id="GO:0042597">
    <property type="term" value="C:periplasmic space"/>
    <property type="evidence" value="ECO:0007669"/>
    <property type="project" value="UniProtKB-SubCell"/>
</dbReference>
<dbReference type="Gene3D" id="2.40.128.110">
    <property type="entry name" value="Lipid/polyisoprenoid-binding, YceI-like"/>
    <property type="match status" value="1"/>
</dbReference>
<dbReference type="HAMAP" id="MF_00780">
    <property type="entry name" value="UPF0312"/>
    <property type="match status" value="1"/>
</dbReference>
<dbReference type="InterPro" id="IPR007372">
    <property type="entry name" value="Lipid/polyisoprenoid-bd_YceI"/>
</dbReference>
<dbReference type="InterPro" id="IPR036761">
    <property type="entry name" value="TTHA0802/YceI-like_sf"/>
</dbReference>
<dbReference type="InterPro" id="IPR023480">
    <property type="entry name" value="UPF0312/YceI"/>
</dbReference>
<dbReference type="NCBIfam" id="NF002994">
    <property type="entry name" value="PRK03757.1"/>
    <property type="match status" value="1"/>
</dbReference>
<dbReference type="PANTHER" id="PTHR34406">
    <property type="entry name" value="PROTEIN YCEI"/>
    <property type="match status" value="1"/>
</dbReference>
<dbReference type="PANTHER" id="PTHR34406:SF1">
    <property type="entry name" value="PROTEIN YCEI"/>
    <property type="match status" value="1"/>
</dbReference>
<dbReference type="Pfam" id="PF04264">
    <property type="entry name" value="YceI"/>
    <property type="match status" value="1"/>
</dbReference>
<dbReference type="SMART" id="SM00867">
    <property type="entry name" value="YceI"/>
    <property type="match status" value="1"/>
</dbReference>
<dbReference type="SUPFAM" id="SSF101874">
    <property type="entry name" value="YceI-like"/>
    <property type="match status" value="1"/>
</dbReference>
<comment type="subcellular location">
    <subcellularLocation>
        <location evidence="1">Periplasm</location>
    </subcellularLocation>
</comment>
<comment type="similarity">
    <text evidence="1">Belongs to the UPF0312 family. Type 1 subfamily.</text>
</comment>
<gene>
    <name evidence="1" type="primary">yceI</name>
    <name type="ordered locus">SPC_2593</name>
</gene>
<keyword id="KW-0574">Periplasm</keyword>
<keyword id="KW-0732">Signal</keyword>